<sequence>MAKTSSTTKDAQDLFHAIWSAYSATPTNLKIIDLYVVFAVFTALLQDVYMALVGPFPFNSFLSGVLSCVGTAVLAVCLRIQVNKENKEFKDLGPERAFADFVLCNLVLHLVIMNFLG</sequence>
<proteinExistence type="inferred from homology"/>
<gene>
    <name type="primary">DAD1</name>
</gene>
<dbReference type="EMBL" id="U79562">
    <property type="protein sequence ID" value="AAC77357.1"/>
    <property type="molecule type" value="mRNA"/>
</dbReference>
<dbReference type="SMR" id="Q9ZRA3"/>
<dbReference type="UniPathway" id="UPA00378"/>
<dbReference type="GO" id="GO:0008250">
    <property type="term" value="C:oligosaccharyltransferase complex"/>
    <property type="evidence" value="ECO:0007669"/>
    <property type="project" value="InterPro"/>
</dbReference>
<dbReference type="GO" id="GO:0006487">
    <property type="term" value="P:protein N-linked glycosylation"/>
    <property type="evidence" value="ECO:0007669"/>
    <property type="project" value="TreeGrafter"/>
</dbReference>
<dbReference type="InterPro" id="IPR003038">
    <property type="entry name" value="DAD/Ost2"/>
</dbReference>
<dbReference type="PANTHER" id="PTHR10705">
    <property type="entry name" value="DOLICHYL-DIPHOSPHOOLIGOSACCHARIDE--PROTEIN GLYCOSYLTRANSFERASE SUBUNIT DAD1"/>
    <property type="match status" value="1"/>
</dbReference>
<dbReference type="PANTHER" id="PTHR10705:SF0">
    <property type="entry name" value="DOLICHYL-DIPHOSPHOOLIGOSACCHARIDE--PROTEIN GLYCOSYLTRANSFERASE SUBUNIT DAD1"/>
    <property type="match status" value="1"/>
</dbReference>
<dbReference type="Pfam" id="PF02109">
    <property type="entry name" value="DAD"/>
    <property type="match status" value="1"/>
</dbReference>
<dbReference type="PIRSF" id="PIRSF005588">
    <property type="entry name" value="DAD"/>
    <property type="match status" value="1"/>
</dbReference>
<accession>Q9ZRA3</accession>
<organism>
    <name type="scientific">Pisum sativum</name>
    <name type="common">Garden pea</name>
    <name type="synonym">Lathyrus oleraceus</name>
    <dbReference type="NCBI Taxonomy" id="3888"/>
    <lineage>
        <taxon>Eukaryota</taxon>
        <taxon>Viridiplantae</taxon>
        <taxon>Streptophyta</taxon>
        <taxon>Embryophyta</taxon>
        <taxon>Tracheophyta</taxon>
        <taxon>Spermatophyta</taxon>
        <taxon>Magnoliopsida</taxon>
        <taxon>eudicotyledons</taxon>
        <taxon>Gunneridae</taxon>
        <taxon>Pentapetalae</taxon>
        <taxon>rosids</taxon>
        <taxon>fabids</taxon>
        <taxon>Fabales</taxon>
        <taxon>Fabaceae</taxon>
        <taxon>Papilionoideae</taxon>
        <taxon>50 kb inversion clade</taxon>
        <taxon>NPAAA clade</taxon>
        <taxon>Hologalegina</taxon>
        <taxon>IRL clade</taxon>
        <taxon>Fabeae</taxon>
        <taxon>Pisum</taxon>
    </lineage>
</organism>
<protein>
    <recommendedName>
        <fullName>Dolichyl-diphosphooligosaccharide--protein glycosyltransferase subunit DAD1</fullName>
        <shortName>Oligosaccharyl transferase subunit DAD1</shortName>
    </recommendedName>
    <alternativeName>
        <fullName>Defender against cell death 1</fullName>
        <shortName>DAD-1</shortName>
    </alternativeName>
    <alternativeName>
        <fullName>Peadad</fullName>
    </alternativeName>
</protein>
<keyword id="KW-0053">Apoptosis</keyword>
<keyword id="KW-0256">Endoplasmic reticulum</keyword>
<keyword id="KW-0472">Membrane</keyword>
<keyword id="KW-0812">Transmembrane</keyword>
<keyword id="KW-1133">Transmembrane helix</keyword>
<evidence type="ECO:0000250" key="1"/>
<evidence type="ECO:0000250" key="2">
    <source>
        <dbReference type="UniProtKB" id="P46964"/>
    </source>
</evidence>
<evidence type="ECO:0000255" key="3"/>
<evidence type="ECO:0000305" key="4"/>
<feature type="chain" id="PRO_0000124029" description="Dolichyl-diphosphooligosaccharide--protein glycosyltransferase subunit DAD1">
    <location>
        <begin position="1"/>
        <end position="117"/>
    </location>
</feature>
<feature type="topological domain" description="Cytoplasmic" evidence="3">
    <location>
        <begin position="1"/>
        <end position="33"/>
    </location>
</feature>
<feature type="transmembrane region" description="Helical" evidence="3">
    <location>
        <begin position="34"/>
        <end position="54"/>
    </location>
</feature>
<feature type="topological domain" description="Lumenal" evidence="3">
    <location>
        <begin position="55"/>
        <end position="57"/>
    </location>
</feature>
<feature type="transmembrane region" description="Helical" evidence="3">
    <location>
        <begin position="58"/>
        <end position="78"/>
    </location>
</feature>
<feature type="topological domain" description="Cytoplasmic" evidence="3">
    <location>
        <begin position="79"/>
        <end position="96"/>
    </location>
</feature>
<feature type="transmembrane region" description="Helical" evidence="3">
    <location>
        <begin position="97"/>
        <end position="117"/>
    </location>
</feature>
<comment type="function">
    <text evidence="2">Subunit of the oligosaccharyl transferase (OST) complex that catalyzes the initial transfer of a defined glycan (Glc(3)Man(9)GlcNAc(2) in eukaryotes) from the lipid carrier dolichol-pyrophosphate to an asparagine residue within an Asn-X-Ser/Thr consensus motif in nascent polypeptide chains, the first step in protein N-glycosylation. N-glycosylation occurs cotranslationally and the complex associates with the Sec61 complex at the channel-forming translocon complex that mediates protein translocation across the endoplasmic reticulum (ER). All subunits are required for a maximal enzyme activity.</text>
</comment>
<comment type="pathway">
    <text>Protein modification; protein glycosylation.</text>
</comment>
<comment type="subunit">
    <text evidence="2">Component of the oligosaccharyltransferase (OST) complex.</text>
</comment>
<comment type="subcellular location">
    <subcellularLocation>
        <location evidence="1">Endoplasmic reticulum membrane</location>
        <topology evidence="1">Multi-pass membrane protein</topology>
    </subcellularLocation>
</comment>
<comment type="similarity">
    <text evidence="4">Belongs to the DAD/OST2 family.</text>
</comment>
<name>DAD1_PEA</name>
<reference key="1">
    <citation type="journal article" date="1997" name="FEBS Lett.">
        <title>The plant homologue of the defender against apoptotic death gene is down-regulated during senescence of flower petals.</title>
        <authorList>
            <person name="Orzaez D."/>
            <person name="Granell A."/>
        </authorList>
    </citation>
    <scope>NUCLEOTIDE SEQUENCE [MRNA]</scope>
</reference>